<organism>
    <name type="scientific">Arthrobacter sp. (strain FB24)</name>
    <dbReference type="NCBI Taxonomy" id="290399"/>
    <lineage>
        <taxon>Bacteria</taxon>
        <taxon>Bacillati</taxon>
        <taxon>Actinomycetota</taxon>
        <taxon>Actinomycetes</taxon>
        <taxon>Micrococcales</taxon>
        <taxon>Micrococcaceae</taxon>
        <taxon>Arthrobacter</taxon>
    </lineage>
</organism>
<protein>
    <recommendedName>
        <fullName evidence="1">Urease accessory protein UreF</fullName>
    </recommendedName>
</protein>
<comment type="function">
    <text evidence="1">Required for maturation of urease via the functional incorporation of the urease nickel metallocenter.</text>
</comment>
<comment type="subunit">
    <text evidence="1">UreD, UreF and UreG form a complex that acts as a GTP-hydrolysis-dependent molecular chaperone, activating the urease apoprotein by helping to assemble the nickel containing metallocenter of UreC. The UreE protein probably delivers the nickel.</text>
</comment>
<comment type="subcellular location">
    <subcellularLocation>
        <location evidence="1">Cytoplasm</location>
    </subcellularLocation>
</comment>
<comment type="similarity">
    <text evidence="1">Belongs to the UreF family.</text>
</comment>
<gene>
    <name evidence="1" type="primary">ureF</name>
    <name type="ordered locus">Arth_0245</name>
</gene>
<reference key="1">
    <citation type="journal article" date="2013" name="Stand. Genomic Sci.">
        <title>Complete genome sequence of Arthrobacter sp. strain FB24.</title>
        <authorList>
            <person name="Nakatsu C.H."/>
            <person name="Barabote R."/>
            <person name="Thompson S."/>
            <person name="Bruce D."/>
            <person name="Detter C."/>
            <person name="Brettin T."/>
            <person name="Han C."/>
            <person name="Beasley F."/>
            <person name="Chen W."/>
            <person name="Konopka A."/>
            <person name="Xie G."/>
        </authorList>
    </citation>
    <scope>NUCLEOTIDE SEQUENCE [LARGE SCALE GENOMIC DNA]</scope>
    <source>
        <strain>FB24</strain>
    </source>
</reference>
<sequence>MAAAGSYQLALQQLTDSALPTGAFAHSLGFETYIERGLVHDEASFGVWLSAFVGQQLSYSDGLAIRFLYEGVSFAELDALLTAQLLPRQLREASTKMGTRLLEIGTEVFPSPELAEYRALVGAGRAAGHQPLAFAVVARSLGVPLTESLAAYLFAAVTSLTQNAVRAIPLGQNAGQRLLRKASDDVAAAVERIGRLAPDDFGAVSPGLEISQMRHERQRARMFMS</sequence>
<proteinExistence type="inferred from homology"/>
<evidence type="ECO:0000255" key="1">
    <source>
        <dbReference type="HAMAP-Rule" id="MF_01385"/>
    </source>
</evidence>
<accession>A0JRH6</accession>
<feature type="chain" id="PRO_0000344073" description="Urease accessory protein UreF">
    <location>
        <begin position="1"/>
        <end position="225"/>
    </location>
</feature>
<keyword id="KW-0143">Chaperone</keyword>
<keyword id="KW-0963">Cytoplasm</keyword>
<keyword id="KW-0996">Nickel insertion</keyword>
<keyword id="KW-1185">Reference proteome</keyword>
<name>UREF_ARTS2</name>
<dbReference type="EMBL" id="CP000454">
    <property type="protein sequence ID" value="ABK01646.1"/>
    <property type="molecule type" value="Genomic_DNA"/>
</dbReference>
<dbReference type="SMR" id="A0JRH6"/>
<dbReference type="STRING" id="290399.Arth_0245"/>
<dbReference type="KEGG" id="art:Arth_0245"/>
<dbReference type="eggNOG" id="COG0830">
    <property type="taxonomic scope" value="Bacteria"/>
</dbReference>
<dbReference type="HOGENOM" id="CLU_049215_4_2_11"/>
<dbReference type="Proteomes" id="UP000000754">
    <property type="component" value="Chromosome"/>
</dbReference>
<dbReference type="GO" id="GO:0005737">
    <property type="term" value="C:cytoplasm"/>
    <property type="evidence" value="ECO:0007669"/>
    <property type="project" value="UniProtKB-SubCell"/>
</dbReference>
<dbReference type="GO" id="GO:0016151">
    <property type="term" value="F:nickel cation binding"/>
    <property type="evidence" value="ECO:0007669"/>
    <property type="project" value="UniProtKB-UniRule"/>
</dbReference>
<dbReference type="Gene3D" id="1.10.4190.10">
    <property type="entry name" value="Urease accessory protein UreF"/>
    <property type="match status" value="1"/>
</dbReference>
<dbReference type="HAMAP" id="MF_01385">
    <property type="entry name" value="UreF"/>
    <property type="match status" value="1"/>
</dbReference>
<dbReference type="InterPro" id="IPR002639">
    <property type="entry name" value="UreF"/>
</dbReference>
<dbReference type="InterPro" id="IPR038277">
    <property type="entry name" value="UreF_sf"/>
</dbReference>
<dbReference type="PANTHER" id="PTHR33620">
    <property type="entry name" value="UREASE ACCESSORY PROTEIN F"/>
    <property type="match status" value="1"/>
</dbReference>
<dbReference type="PANTHER" id="PTHR33620:SF1">
    <property type="entry name" value="UREASE ACCESSORY PROTEIN F"/>
    <property type="match status" value="1"/>
</dbReference>
<dbReference type="Pfam" id="PF01730">
    <property type="entry name" value="UreF"/>
    <property type="match status" value="1"/>
</dbReference>
<dbReference type="PIRSF" id="PIRSF009467">
    <property type="entry name" value="Ureas_acces_UreF"/>
    <property type="match status" value="1"/>
</dbReference>